<dbReference type="EC" id="1.17.7.1" evidence="1"/>
<dbReference type="EMBL" id="BA000022">
    <property type="protein sequence ID" value="BAA17717.1"/>
    <property type="molecule type" value="Genomic_DNA"/>
</dbReference>
<dbReference type="PIR" id="S77159">
    <property type="entry name" value="S77159"/>
</dbReference>
<dbReference type="SMR" id="P73672"/>
<dbReference type="FunCoup" id="P73672">
    <property type="interactions" value="217"/>
</dbReference>
<dbReference type="IntAct" id="P73672">
    <property type="interactions" value="1"/>
</dbReference>
<dbReference type="STRING" id="1148.gene:10498584"/>
<dbReference type="PaxDb" id="1148-1652798"/>
<dbReference type="EnsemblBacteria" id="BAA17717">
    <property type="protein sequence ID" value="BAA17717"/>
    <property type="gene ID" value="BAA17717"/>
</dbReference>
<dbReference type="KEGG" id="syn:slr2136"/>
<dbReference type="eggNOG" id="COG0821">
    <property type="taxonomic scope" value="Bacteria"/>
</dbReference>
<dbReference type="InParanoid" id="P73672"/>
<dbReference type="PhylomeDB" id="P73672"/>
<dbReference type="UniPathway" id="UPA00056">
    <property type="reaction ID" value="UER00096"/>
</dbReference>
<dbReference type="Proteomes" id="UP000001425">
    <property type="component" value="Chromosome"/>
</dbReference>
<dbReference type="GO" id="GO:0051539">
    <property type="term" value="F:4 iron, 4 sulfur cluster binding"/>
    <property type="evidence" value="ECO:0000250"/>
    <property type="project" value="UniProtKB"/>
</dbReference>
<dbReference type="GO" id="GO:0046429">
    <property type="term" value="F:4-hydroxy-3-methylbut-2-en-1-yl diphosphate synthase activity (ferredoxin)"/>
    <property type="evidence" value="ECO:0000318"/>
    <property type="project" value="GO_Central"/>
</dbReference>
<dbReference type="GO" id="GO:0005506">
    <property type="term" value="F:iron ion binding"/>
    <property type="evidence" value="ECO:0007669"/>
    <property type="project" value="InterPro"/>
</dbReference>
<dbReference type="GO" id="GO:0019288">
    <property type="term" value="P:isopentenyl diphosphate biosynthetic process, methylerythritol 4-phosphate pathway"/>
    <property type="evidence" value="ECO:0000318"/>
    <property type="project" value="GO_Central"/>
</dbReference>
<dbReference type="GO" id="GO:0016114">
    <property type="term" value="P:terpenoid biosynthetic process"/>
    <property type="evidence" value="ECO:0007669"/>
    <property type="project" value="InterPro"/>
</dbReference>
<dbReference type="FunFam" id="3.20.20.20:FF:000005">
    <property type="entry name" value="4-hydroxy-3-methylbut-2-en-1-yl diphosphate synthase (flavodoxin)"/>
    <property type="match status" value="1"/>
</dbReference>
<dbReference type="Gene3D" id="3.20.20.20">
    <property type="entry name" value="Dihydropteroate synthase-like"/>
    <property type="match status" value="1"/>
</dbReference>
<dbReference type="Gene3D" id="3.30.413.10">
    <property type="entry name" value="Sulfite Reductase Hemoprotein, domain 1"/>
    <property type="match status" value="1"/>
</dbReference>
<dbReference type="HAMAP" id="MF_00159">
    <property type="entry name" value="IspG"/>
    <property type="match status" value="1"/>
</dbReference>
<dbReference type="InterPro" id="IPR011005">
    <property type="entry name" value="Dihydropteroate_synth-like_sf"/>
</dbReference>
<dbReference type="InterPro" id="IPR016425">
    <property type="entry name" value="IspG_bac"/>
</dbReference>
<dbReference type="InterPro" id="IPR004588">
    <property type="entry name" value="IspG_bac-typ"/>
</dbReference>
<dbReference type="InterPro" id="IPR045854">
    <property type="entry name" value="NO2/SO3_Rdtase_4Fe4S_sf"/>
</dbReference>
<dbReference type="NCBIfam" id="TIGR00612">
    <property type="entry name" value="ispG_gcpE"/>
    <property type="match status" value="1"/>
</dbReference>
<dbReference type="NCBIfam" id="NF001540">
    <property type="entry name" value="PRK00366.1"/>
    <property type="match status" value="1"/>
</dbReference>
<dbReference type="PANTHER" id="PTHR30454">
    <property type="entry name" value="4-HYDROXY-3-METHYLBUT-2-EN-1-YL DIPHOSPHATE SYNTHASE"/>
    <property type="match status" value="1"/>
</dbReference>
<dbReference type="PANTHER" id="PTHR30454:SF0">
    <property type="entry name" value="4-HYDROXY-3-METHYLBUT-2-EN-1-YL DIPHOSPHATE SYNTHASE (FERREDOXIN), CHLOROPLASTIC"/>
    <property type="match status" value="1"/>
</dbReference>
<dbReference type="Pfam" id="PF04551">
    <property type="entry name" value="GcpE"/>
    <property type="match status" value="1"/>
</dbReference>
<dbReference type="PIRSF" id="PIRSF004640">
    <property type="entry name" value="IspG"/>
    <property type="match status" value="1"/>
</dbReference>
<dbReference type="SUPFAM" id="SSF56014">
    <property type="entry name" value="Nitrite and sulphite reductase 4Fe-4S domain-like"/>
    <property type="match status" value="1"/>
</dbReference>
<evidence type="ECO:0000255" key="1">
    <source>
        <dbReference type="HAMAP-Rule" id="MF_00159"/>
    </source>
</evidence>
<keyword id="KW-0004">4Fe-4S</keyword>
<keyword id="KW-0408">Iron</keyword>
<keyword id="KW-0411">Iron-sulfur</keyword>
<keyword id="KW-0414">Isoprene biosynthesis</keyword>
<keyword id="KW-0479">Metal-binding</keyword>
<keyword id="KW-0560">Oxidoreductase</keyword>
<keyword id="KW-1185">Reference proteome</keyword>
<name>ISPG_SYNY3</name>
<comment type="function">
    <text evidence="1">Converts 2C-methyl-D-erythritol 2,4-cyclodiphosphate (ME-2,4cPP) into 1-hydroxy-2-methyl-2-(E)-butenyl 4-diphosphate.</text>
</comment>
<comment type="catalytic activity">
    <reaction evidence="1">
        <text>(2E)-4-hydroxy-3-methylbut-2-enyl diphosphate + 2 oxidized [2Fe-2S]-[ferredoxin] + H2O = 2-C-methyl-D-erythritol 2,4-cyclic diphosphate + 2 reduced [2Fe-2S]-[ferredoxin] + H(+)</text>
        <dbReference type="Rhea" id="RHEA:26119"/>
        <dbReference type="Rhea" id="RHEA-COMP:10000"/>
        <dbReference type="Rhea" id="RHEA-COMP:10001"/>
        <dbReference type="ChEBI" id="CHEBI:15377"/>
        <dbReference type="ChEBI" id="CHEBI:15378"/>
        <dbReference type="ChEBI" id="CHEBI:33737"/>
        <dbReference type="ChEBI" id="CHEBI:33738"/>
        <dbReference type="ChEBI" id="CHEBI:58483"/>
        <dbReference type="ChEBI" id="CHEBI:128753"/>
        <dbReference type="EC" id="1.17.7.1"/>
    </reaction>
</comment>
<comment type="cofactor">
    <cofactor evidence="1">
        <name>[4Fe-4S] cluster</name>
        <dbReference type="ChEBI" id="CHEBI:49883"/>
    </cofactor>
    <text evidence="1">Binds 1 [4Fe-4S] cluster.</text>
</comment>
<comment type="pathway">
    <text evidence="1">Isoprenoid biosynthesis; isopentenyl diphosphate biosynthesis via DXP pathway; isopentenyl diphosphate from 1-deoxy-D-xylulose 5-phosphate: step 5/6.</text>
</comment>
<comment type="similarity">
    <text evidence="1">Belongs to the IspG family.</text>
</comment>
<sequence>MVTASLPTPVQPEFDTTIHRRKTRPVPVGAVTVGGGHPVVVQSMINEDTLDVDGSVAGIRRLHEIGCEIVRVTVPSMAHAKALADIKQKLQATYQAVPLVADVHHNGMKIALEVAKHVDKVRINPGLYVFEKPDAQREGYSDQEFAEIGEKIRETLEPLVISLRDQGKSMRIGVNHGSLSERMLFTYGDTPEGMVQSALEFIKICESLDFRNLVVSMKASRVPVMLAAYRLMVKRMDELGMDYPLHLGVTEAGDGEYGRIKSTAGIATLLADGIGDTIRVSLTEAPEKEIPVCYSILQALGLRKTMVEYVACPSCGRTLFNLEDVLHEVREATKHLTGLDIAVMGCIVNGPGEMADADYGYVGKQAGYIALYRGREEIKRVPETDGVQELINLIKADGRWVDP</sequence>
<organism>
    <name type="scientific">Synechocystis sp. (strain ATCC 27184 / PCC 6803 / Kazusa)</name>
    <dbReference type="NCBI Taxonomy" id="1111708"/>
    <lineage>
        <taxon>Bacteria</taxon>
        <taxon>Bacillati</taxon>
        <taxon>Cyanobacteriota</taxon>
        <taxon>Cyanophyceae</taxon>
        <taxon>Synechococcales</taxon>
        <taxon>Merismopediaceae</taxon>
        <taxon>Synechocystis</taxon>
    </lineage>
</organism>
<accession>P73672</accession>
<gene>
    <name evidence="1" type="primary">ispG</name>
    <name type="synonym">gcpE</name>
    <name type="ordered locus">slr2136</name>
</gene>
<protein>
    <recommendedName>
        <fullName evidence="1">4-hydroxy-3-methylbut-2-en-1-yl diphosphate synthase (ferredoxin)</fullName>
        <ecNumber evidence="1">1.17.7.1</ecNumber>
    </recommendedName>
    <alternativeName>
        <fullName evidence="1">1-hydroxy-2-methyl-2-(E)-butenyl 4-diphosphate synthase</fullName>
    </alternativeName>
</protein>
<feature type="chain" id="PRO_0000190641" description="4-hydroxy-3-methylbut-2-en-1-yl diphosphate synthase (ferredoxin)">
    <location>
        <begin position="1"/>
        <end position="403"/>
    </location>
</feature>
<feature type="binding site" evidence="1">
    <location>
        <position position="312"/>
    </location>
    <ligand>
        <name>[4Fe-4S] cluster</name>
        <dbReference type="ChEBI" id="CHEBI:49883"/>
    </ligand>
</feature>
<feature type="binding site" evidence="1">
    <location>
        <position position="315"/>
    </location>
    <ligand>
        <name>[4Fe-4S] cluster</name>
        <dbReference type="ChEBI" id="CHEBI:49883"/>
    </ligand>
</feature>
<feature type="binding site" evidence="1">
    <location>
        <position position="346"/>
    </location>
    <ligand>
        <name>[4Fe-4S] cluster</name>
        <dbReference type="ChEBI" id="CHEBI:49883"/>
    </ligand>
</feature>
<feature type="binding site" evidence="1">
    <location>
        <position position="353"/>
    </location>
    <ligand>
        <name>[4Fe-4S] cluster</name>
        <dbReference type="ChEBI" id="CHEBI:49883"/>
    </ligand>
</feature>
<proteinExistence type="inferred from homology"/>
<reference key="1">
    <citation type="journal article" date="1996" name="DNA Res.">
        <title>Sequence analysis of the genome of the unicellular cyanobacterium Synechocystis sp. strain PCC6803. II. Sequence determination of the entire genome and assignment of potential protein-coding regions.</title>
        <authorList>
            <person name="Kaneko T."/>
            <person name="Sato S."/>
            <person name="Kotani H."/>
            <person name="Tanaka A."/>
            <person name="Asamizu E."/>
            <person name="Nakamura Y."/>
            <person name="Miyajima N."/>
            <person name="Hirosawa M."/>
            <person name="Sugiura M."/>
            <person name="Sasamoto S."/>
            <person name="Kimura T."/>
            <person name="Hosouchi T."/>
            <person name="Matsuno A."/>
            <person name="Muraki A."/>
            <person name="Nakazaki N."/>
            <person name="Naruo K."/>
            <person name="Okumura S."/>
            <person name="Shimpo S."/>
            <person name="Takeuchi C."/>
            <person name="Wada T."/>
            <person name="Watanabe A."/>
            <person name="Yamada M."/>
            <person name="Yasuda M."/>
            <person name="Tabata S."/>
        </authorList>
    </citation>
    <scope>NUCLEOTIDE SEQUENCE [LARGE SCALE GENOMIC DNA]</scope>
    <source>
        <strain>ATCC 27184 / PCC 6803 / Kazusa</strain>
    </source>
</reference>